<feature type="chain" id="PRO_0000368561" description="ATP synthase subunit b">
    <location>
        <begin position="1"/>
        <end position="173"/>
    </location>
</feature>
<feature type="transmembrane region" description="Helical" evidence="1">
    <location>
        <begin position="12"/>
        <end position="32"/>
    </location>
</feature>
<reference key="1">
    <citation type="journal article" date="2006" name="Proc. Natl. Acad. Sci. U.S.A.">
        <title>Genome reduction in Leptospira borgpetersenii reflects limited transmission potential.</title>
        <authorList>
            <person name="Bulach D.M."/>
            <person name="Zuerner R.L."/>
            <person name="Wilson P."/>
            <person name="Seemann T."/>
            <person name="McGrath A."/>
            <person name="Cullen P.A."/>
            <person name="Davis J."/>
            <person name="Johnson M."/>
            <person name="Kuczek E."/>
            <person name="Alt D.P."/>
            <person name="Peterson-Burch B."/>
            <person name="Coppel R.L."/>
            <person name="Rood J.I."/>
            <person name="Davies J.K."/>
            <person name="Adler B."/>
        </authorList>
    </citation>
    <scope>NUCLEOTIDE SEQUENCE [LARGE SCALE GENOMIC DNA]</scope>
    <source>
        <strain>L550</strain>
    </source>
</reference>
<accession>Q04ZU1</accession>
<gene>
    <name evidence="1" type="primary">atpF</name>
    <name type="ordered locus">LBL_1975</name>
</gene>
<proteinExistence type="inferred from homology"/>
<organism>
    <name type="scientific">Leptospira borgpetersenii serovar Hardjo-bovis (strain L550)</name>
    <dbReference type="NCBI Taxonomy" id="355276"/>
    <lineage>
        <taxon>Bacteria</taxon>
        <taxon>Pseudomonadati</taxon>
        <taxon>Spirochaetota</taxon>
        <taxon>Spirochaetia</taxon>
        <taxon>Leptospirales</taxon>
        <taxon>Leptospiraceae</taxon>
        <taxon>Leptospira</taxon>
    </lineage>
</organism>
<keyword id="KW-0066">ATP synthesis</keyword>
<keyword id="KW-0997">Cell inner membrane</keyword>
<keyword id="KW-1003">Cell membrane</keyword>
<keyword id="KW-0138">CF(0)</keyword>
<keyword id="KW-0375">Hydrogen ion transport</keyword>
<keyword id="KW-0406">Ion transport</keyword>
<keyword id="KW-0472">Membrane</keyword>
<keyword id="KW-0812">Transmembrane</keyword>
<keyword id="KW-1133">Transmembrane helix</keyword>
<keyword id="KW-0813">Transport</keyword>
<name>ATPF_LEPBL</name>
<protein>
    <recommendedName>
        <fullName evidence="1">ATP synthase subunit b</fullName>
    </recommendedName>
    <alternativeName>
        <fullName evidence="1">ATP synthase F(0) sector subunit b</fullName>
    </alternativeName>
    <alternativeName>
        <fullName evidence="1">ATPase subunit I</fullName>
    </alternativeName>
    <alternativeName>
        <fullName evidence="1">F-type ATPase subunit b</fullName>
        <shortName evidence="1">F-ATPase subunit b</shortName>
    </alternativeName>
</protein>
<evidence type="ECO:0000255" key="1">
    <source>
        <dbReference type="HAMAP-Rule" id="MF_01398"/>
    </source>
</evidence>
<dbReference type="EMBL" id="CP000348">
    <property type="protein sequence ID" value="ABJ79404.1"/>
    <property type="molecule type" value="Genomic_DNA"/>
</dbReference>
<dbReference type="RefSeq" id="WP_002754296.1">
    <property type="nucleotide sequence ID" value="NC_008508.1"/>
</dbReference>
<dbReference type="SMR" id="Q04ZU1"/>
<dbReference type="KEGG" id="lbl:LBL_1975"/>
<dbReference type="HOGENOM" id="CLU_079215_4_1_12"/>
<dbReference type="GO" id="GO:0005886">
    <property type="term" value="C:plasma membrane"/>
    <property type="evidence" value="ECO:0007669"/>
    <property type="project" value="UniProtKB-SubCell"/>
</dbReference>
<dbReference type="GO" id="GO:0045259">
    <property type="term" value="C:proton-transporting ATP synthase complex"/>
    <property type="evidence" value="ECO:0007669"/>
    <property type="project" value="UniProtKB-KW"/>
</dbReference>
<dbReference type="GO" id="GO:0046933">
    <property type="term" value="F:proton-transporting ATP synthase activity, rotational mechanism"/>
    <property type="evidence" value="ECO:0007669"/>
    <property type="project" value="UniProtKB-UniRule"/>
</dbReference>
<dbReference type="GO" id="GO:0046961">
    <property type="term" value="F:proton-transporting ATPase activity, rotational mechanism"/>
    <property type="evidence" value="ECO:0007669"/>
    <property type="project" value="TreeGrafter"/>
</dbReference>
<dbReference type="CDD" id="cd06503">
    <property type="entry name" value="ATP-synt_Fo_b"/>
    <property type="match status" value="1"/>
</dbReference>
<dbReference type="HAMAP" id="MF_01398">
    <property type="entry name" value="ATP_synth_b_bprime"/>
    <property type="match status" value="1"/>
</dbReference>
<dbReference type="InterPro" id="IPR002146">
    <property type="entry name" value="ATP_synth_b/b'su_bac/chlpt"/>
</dbReference>
<dbReference type="InterPro" id="IPR005864">
    <property type="entry name" value="ATP_synth_F0_bsu_bac"/>
</dbReference>
<dbReference type="InterPro" id="IPR050059">
    <property type="entry name" value="ATP_synthase_B_chain"/>
</dbReference>
<dbReference type="NCBIfam" id="TIGR01144">
    <property type="entry name" value="ATP_synt_b"/>
    <property type="match status" value="1"/>
</dbReference>
<dbReference type="NCBIfam" id="NF009991">
    <property type="entry name" value="PRK13460.1"/>
    <property type="match status" value="1"/>
</dbReference>
<dbReference type="PANTHER" id="PTHR33445:SF1">
    <property type="entry name" value="ATP SYNTHASE SUBUNIT B"/>
    <property type="match status" value="1"/>
</dbReference>
<dbReference type="PANTHER" id="PTHR33445">
    <property type="entry name" value="ATP SYNTHASE SUBUNIT B', CHLOROPLASTIC"/>
    <property type="match status" value="1"/>
</dbReference>
<dbReference type="Pfam" id="PF00430">
    <property type="entry name" value="ATP-synt_B"/>
    <property type="match status" value="1"/>
</dbReference>
<comment type="function">
    <text evidence="1">F(1)F(0) ATP synthase produces ATP from ADP in the presence of a proton or sodium gradient. F-type ATPases consist of two structural domains, F(1) containing the extramembraneous catalytic core and F(0) containing the membrane proton channel, linked together by a central stalk and a peripheral stalk. During catalysis, ATP synthesis in the catalytic domain of F(1) is coupled via a rotary mechanism of the central stalk subunits to proton translocation.</text>
</comment>
<comment type="function">
    <text evidence="1">Component of the F(0) channel, it forms part of the peripheral stalk, linking F(1) to F(0).</text>
</comment>
<comment type="subunit">
    <text evidence="1">F-type ATPases have 2 components, F(1) - the catalytic core - and F(0) - the membrane proton channel. F(1) has five subunits: alpha(3), beta(3), gamma(1), delta(1), epsilon(1). F(0) has three main subunits: a(1), b(2) and c(10-14). The alpha and beta chains form an alternating ring which encloses part of the gamma chain. F(1) is attached to F(0) by a central stalk formed by the gamma and epsilon chains, while a peripheral stalk is formed by the delta and b chains.</text>
</comment>
<comment type="subcellular location">
    <subcellularLocation>
        <location evidence="1">Cell inner membrane</location>
        <topology evidence="1">Single-pass membrane protein</topology>
    </subcellularLocation>
</comment>
<comment type="similarity">
    <text evidence="1">Belongs to the ATPase B chain family.</text>
</comment>
<sequence length="173" mass="19244">MILLAAKGLSLLDVNPGLVVWTLITFLVVVLVLKKFAWDVILKALDERAQAVQNDIEKASELRLEAEALLKDYEARLNSAKDEANAIVAEARSDALKLKNKLLEETNQEVKAQKDQAVKEIELAKGKALEQLQTQFVEMTITIAGKVLEKQLKAEDYKAFIETELNKLGKLSA</sequence>